<proteinExistence type="inferred from homology"/>
<keyword id="KW-0004">4Fe-4S</keyword>
<keyword id="KW-0963">Cytoplasm</keyword>
<keyword id="KW-0408">Iron</keyword>
<keyword id="KW-0411">Iron-sulfur</keyword>
<keyword id="KW-0479">Metal-binding</keyword>
<keyword id="KW-0949">S-adenosyl-L-methionine</keyword>
<keyword id="KW-0808">Transferase</keyword>
<protein>
    <recommendedName>
        <fullName evidence="1">Ribosomal protein uS12 methylthiotransferase RimO</fullName>
        <shortName evidence="1">uS12 MTTase</shortName>
        <shortName evidence="1">uS12 methylthiotransferase</shortName>
        <ecNumber evidence="1">2.8.4.4</ecNumber>
    </recommendedName>
    <alternativeName>
        <fullName evidence="1">Ribosomal protein uS12 (aspartate-C(3))-methylthiotransferase</fullName>
    </alternativeName>
    <alternativeName>
        <fullName evidence="1">Ribosome maturation factor RimO</fullName>
    </alternativeName>
</protein>
<name>RIMO_SHEPC</name>
<evidence type="ECO:0000255" key="1">
    <source>
        <dbReference type="HAMAP-Rule" id="MF_01865"/>
    </source>
</evidence>
<evidence type="ECO:0000255" key="2">
    <source>
        <dbReference type="PROSITE-ProRule" id="PRU01266"/>
    </source>
</evidence>
<organism>
    <name type="scientific">Shewanella putrefaciens (strain CN-32 / ATCC BAA-453)</name>
    <dbReference type="NCBI Taxonomy" id="319224"/>
    <lineage>
        <taxon>Bacteria</taxon>
        <taxon>Pseudomonadati</taxon>
        <taxon>Pseudomonadota</taxon>
        <taxon>Gammaproteobacteria</taxon>
        <taxon>Alteromonadales</taxon>
        <taxon>Shewanellaceae</taxon>
        <taxon>Shewanella</taxon>
    </lineage>
</organism>
<sequence>MTVETFKPKQTTTLDTPAKRLEAASTNAVTTGNRIGFVSLGCPKNLVDSERILTQLRIDGYEVTNSYDNADLVIVNTCGFIDAAVEESLDAVREALEENGKVIVTGCLGAKENQIREVYPDVLEITGPHSYEAVLKHVHKYVPKPEHNPFTSLIPQTGVKLTPKHYAYLKISEGCDNRCTFCIIPSLRGDLNSRPAGSILDEAKRLVESGVQEILVVSQDTSAYGKDKSGRTDFWDGMPVKQDITSLARQLGKMGAWVRLHYIYPYPWVDDLIPLMAEGLILPYLDIPMQHASPRILKMMKRPGRVDRQLEAIQRWREICPDLVIRSTFIVGFPGETEEDFQILLDFLKEARLDRVGCFKYSEVDGAVANTIAELISEDVKEDRYHRFMELQAEISAERLARFVGRTLDILIDDVDEEGAIGRSFADAPEIDGMVFINGETELEPGMLVRARITHSDEHDLWAEVVDADTQD</sequence>
<reference key="1">
    <citation type="submission" date="2007-04" db="EMBL/GenBank/DDBJ databases">
        <title>Complete sequence of Shewanella putrefaciens CN-32.</title>
        <authorList>
            <consortium name="US DOE Joint Genome Institute"/>
            <person name="Copeland A."/>
            <person name="Lucas S."/>
            <person name="Lapidus A."/>
            <person name="Barry K."/>
            <person name="Detter J.C."/>
            <person name="Glavina del Rio T."/>
            <person name="Hammon N."/>
            <person name="Israni S."/>
            <person name="Dalin E."/>
            <person name="Tice H."/>
            <person name="Pitluck S."/>
            <person name="Chain P."/>
            <person name="Malfatti S."/>
            <person name="Shin M."/>
            <person name="Vergez L."/>
            <person name="Schmutz J."/>
            <person name="Larimer F."/>
            <person name="Land M."/>
            <person name="Hauser L."/>
            <person name="Kyrpides N."/>
            <person name="Mikhailova N."/>
            <person name="Romine M.F."/>
            <person name="Fredrickson J."/>
            <person name="Tiedje J."/>
            <person name="Richardson P."/>
        </authorList>
    </citation>
    <scope>NUCLEOTIDE SEQUENCE [LARGE SCALE GENOMIC DNA]</scope>
    <source>
        <strain>CN-32 / ATCC BAA-453</strain>
    </source>
</reference>
<accession>A4Y2Z8</accession>
<feature type="chain" id="PRO_0000375004" description="Ribosomal protein uS12 methylthiotransferase RimO">
    <location>
        <begin position="1"/>
        <end position="472"/>
    </location>
</feature>
<feature type="domain" description="MTTase N-terminal" evidence="1">
    <location>
        <begin position="33"/>
        <end position="143"/>
    </location>
</feature>
<feature type="domain" description="Radical SAM core" evidence="2">
    <location>
        <begin position="161"/>
        <end position="398"/>
    </location>
</feature>
<feature type="domain" description="TRAM" evidence="1">
    <location>
        <begin position="401"/>
        <end position="467"/>
    </location>
</feature>
<feature type="binding site" evidence="1">
    <location>
        <position position="42"/>
    </location>
    <ligand>
        <name>[4Fe-4S] cluster</name>
        <dbReference type="ChEBI" id="CHEBI:49883"/>
        <label>1</label>
    </ligand>
</feature>
<feature type="binding site" evidence="1">
    <location>
        <position position="78"/>
    </location>
    <ligand>
        <name>[4Fe-4S] cluster</name>
        <dbReference type="ChEBI" id="CHEBI:49883"/>
        <label>1</label>
    </ligand>
</feature>
<feature type="binding site" evidence="1">
    <location>
        <position position="107"/>
    </location>
    <ligand>
        <name>[4Fe-4S] cluster</name>
        <dbReference type="ChEBI" id="CHEBI:49883"/>
        <label>1</label>
    </ligand>
</feature>
<feature type="binding site" evidence="1">
    <location>
        <position position="175"/>
    </location>
    <ligand>
        <name>[4Fe-4S] cluster</name>
        <dbReference type="ChEBI" id="CHEBI:49883"/>
        <label>2</label>
        <note>4Fe-4S-S-AdoMet</note>
    </ligand>
</feature>
<feature type="binding site" evidence="1">
    <location>
        <position position="179"/>
    </location>
    <ligand>
        <name>[4Fe-4S] cluster</name>
        <dbReference type="ChEBI" id="CHEBI:49883"/>
        <label>2</label>
        <note>4Fe-4S-S-AdoMet</note>
    </ligand>
</feature>
<feature type="binding site" evidence="1">
    <location>
        <position position="182"/>
    </location>
    <ligand>
        <name>[4Fe-4S] cluster</name>
        <dbReference type="ChEBI" id="CHEBI:49883"/>
        <label>2</label>
        <note>4Fe-4S-S-AdoMet</note>
    </ligand>
</feature>
<gene>
    <name evidence="1" type="primary">rimO</name>
    <name type="ordered locus">Sputcn32_0599</name>
</gene>
<comment type="function">
    <text evidence="1">Catalyzes the methylthiolation of an aspartic acid residue of ribosomal protein uS12.</text>
</comment>
<comment type="catalytic activity">
    <reaction evidence="1">
        <text>L-aspartate(89)-[ribosomal protein uS12]-hydrogen + (sulfur carrier)-SH + AH2 + 2 S-adenosyl-L-methionine = 3-methylsulfanyl-L-aspartate(89)-[ribosomal protein uS12]-hydrogen + (sulfur carrier)-H + 5'-deoxyadenosine + L-methionine + A + S-adenosyl-L-homocysteine + 2 H(+)</text>
        <dbReference type="Rhea" id="RHEA:37087"/>
        <dbReference type="Rhea" id="RHEA-COMP:10460"/>
        <dbReference type="Rhea" id="RHEA-COMP:10461"/>
        <dbReference type="Rhea" id="RHEA-COMP:14737"/>
        <dbReference type="Rhea" id="RHEA-COMP:14739"/>
        <dbReference type="ChEBI" id="CHEBI:13193"/>
        <dbReference type="ChEBI" id="CHEBI:15378"/>
        <dbReference type="ChEBI" id="CHEBI:17319"/>
        <dbReference type="ChEBI" id="CHEBI:17499"/>
        <dbReference type="ChEBI" id="CHEBI:29917"/>
        <dbReference type="ChEBI" id="CHEBI:29961"/>
        <dbReference type="ChEBI" id="CHEBI:57844"/>
        <dbReference type="ChEBI" id="CHEBI:57856"/>
        <dbReference type="ChEBI" id="CHEBI:59789"/>
        <dbReference type="ChEBI" id="CHEBI:64428"/>
        <dbReference type="ChEBI" id="CHEBI:73599"/>
        <dbReference type="EC" id="2.8.4.4"/>
    </reaction>
</comment>
<comment type="cofactor">
    <cofactor evidence="1">
        <name>[4Fe-4S] cluster</name>
        <dbReference type="ChEBI" id="CHEBI:49883"/>
    </cofactor>
    <text evidence="1">Binds 2 [4Fe-4S] clusters. One cluster is coordinated with 3 cysteines and an exchangeable S-adenosyl-L-methionine.</text>
</comment>
<comment type="subcellular location">
    <subcellularLocation>
        <location evidence="1">Cytoplasm</location>
    </subcellularLocation>
</comment>
<comment type="similarity">
    <text evidence="1">Belongs to the methylthiotransferase family. RimO subfamily.</text>
</comment>
<dbReference type="EC" id="2.8.4.4" evidence="1"/>
<dbReference type="EMBL" id="CP000681">
    <property type="protein sequence ID" value="ABP74331.1"/>
    <property type="molecule type" value="Genomic_DNA"/>
</dbReference>
<dbReference type="SMR" id="A4Y2Z8"/>
<dbReference type="STRING" id="319224.Sputcn32_0599"/>
<dbReference type="KEGG" id="spc:Sputcn32_0599"/>
<dbReference type="eggNOG" id="COG0621">
    <property type="taxonomic scope" value="Bacteria"/>
</dbReference>
<dbReference type="HOGENOM" id="CLU_018697_0_0_6"/>
<dbReference type="GO" id="GO:0005829">
    <property type="term" value="C:cytosol"/>
    <property type="evidence" value="ECO:0007669"/>
    <property type="project" value="TreeGrafter"/>
</dbReference>
<dbReference type="GO" id="GO:0051539">
    <property type="term" value="F:4 iron, 4 sulfur cluster binding"/>
    <property type="evidence" value="ECO:0007669"/>
    <property type="project" value="UniProtKB-UniRule"/>
</dbReference>
<dbReference type="GO" id="GO:0035599">
    <property type="term" value="F:aspartic acid methylthiotransferase activity"/>
    <property type="evidence" value="ECO:0007669"/>
    <property type="project" value="TreeGrafter"/>
</dbReference>
<dbReference type="GO" id="GO:0046872">
    <property type="term" value="F:metal ion binding"/>
    <property type="evidence" value="ECO:0007669"/>
    <property type="project" value="UniProtKB-KW"/>
</dbReference>
<dbReference type="GO" id="GO:0103039">
    <property type="term" value="F:protein methylthiotransferase activity"/>
    <property type="evidence" value="ECO:0007669"/>
    <property type="project" value="UniProtKB-EC"/>
</dbReference>
<dbReference type="GO" id="GO:0006400">
    <property type="term" value="P:tRNA modification"/>
    <property type="evidence" value="ECO:0007669"/>
    <property type="project" value="InterPro"/>
</dbReference>
<dbReference type="CDD" id="cd01335">
    <property type="entry name" value="Radical_SAM"/>
    <property type="match status" value="1"/>
</dbReference>
<dbReference type="FunFam" id="2.40.50.140:FF:000060">
    <property type="entry name" value="Ribosomal protein S12 methylthiotransferase RimO"/>
    <property type="match status" value="1"/>
</dbReference>
<dbReference type="FunFam" id="3.40.50.12160:FF:000002">
    <property type="entry name" value="Ribosomal protein S12 methylthiotransferase RimO"/>
    <property type="match status" value="1"/>
</dbReference>
<dbReference type="FunFam" id="3.80.30.20:FF:000001">
    <property type="entry name" value="tRNA-2-methylthio-N(6)-dimethylallyladenosine synthase 2"/>
    <property type="match status" value="1"/>
</dbReference>
<dbReference type="Gene3D" id="3.40.50.12160">
    <property type="entry name" value="Methylthiotransferase, N-terminal domain"/>
    <property type="match status" value="1"/>
</dbReference>
<dbReference type="Gene3D" id="2.40.50.140">
    <property type="entry name" value="Nucleic acid-binding proteins"/>
    <property type="match status" value="1"/>
</dbReference>
<dbReference type="Gene3D" id="3.80.30.20">
    <property type="entry name" value="tm_1862 like domain"/>
    <property type="match status" value="1"/>
</dbReference>
<dbReference type="HAMAP" id="MF_01865">
    <property type="entry name" value="MTTase_RimO"/>
    <property type="match status" value="1"/>
</dbReference>
<dbReference type="InterPro" id="IPR006638">
    <property type="entry name" value="Elp3/MiaA/NifB-like_rSAM"/>
</dbReference>
<dbReference type="InterPro" id="IPR005839">
    <property type="entry name" value="Methylthiotransferase"/>
</dbReference>
<dbReference type="InterPro" id="IPR020612">
    <property type="entry name" value="Methylthiotransferase_CS"/>
</dbReference>
<dbReference type="InterPro" id="IPR013848">
    <property type="entry name" value="Methylthiotransferase_N"/>
</dbReference>
<dbReference type="InterPro" id="IPR038135">
    <property type="entry name" value="Methylthiotransferase_N_sf"/>
</dbReference>
<dbReference type="InterPro" id="IPR012340">
    <property type="entry name" value="NA-bd_OB-fold"/>
</dbReference>
<dbReference type="InterPro" id="IPR005840">
    <property type="entry name" value="Ribosomal_uS12_MeSTrfase_RimO"/>
</dbReference>
<dbReference type="InterPro" id="IPR007197">
    <property type="entry name" value="rSAM"/>
</dbReference>
<dbReference type="InterPro" id="IPR023404">
    <property type="entry name" value="rSAM_horseshoe"/>
</dbReference>
<dbReference type="InterPro" id="IPR002792">
    <property type="entry name" value="TRAM_dom"/>
</dbReference>
<dbReference type="NCBIfam" id="TIGR01125">
    <property type="entry name" value="30S ribosomal protein S12 methylthiotransferase RimO"/>
    <property type="match status" value="1"/>
</dbReference>
<dbReference type="NCBIfam" id="TIGR00089">
    <property type="entry name" value="MiaB/RimO family radical SAM methylthiotransferase"/>
    <property type="match status" value="1"/>
</dbReference>
<dbReference type="PANTHER" id="PTHR43837">
    <property type="entry name" value="RIBOSOMAL PROTEIN S12 METHYLTHIOTRANSFERASE RIMO"/>
    <property type="match status" value="1"/>
</dbReference>
<dbReference type="PANTHER" id="PTHR43837:SF1">
    <property type="entry name" value="RIBOSOMAL PROTEIN US12 METHYLTHIOTRANSFERASE RIMO"/>
    <property type="match status" value="1"/>
</dbReference>
<dbReference type="Pfam" id="PF04055">
    <property type="entry name" value="Radical_SAM"/>
    <property type="match status" value="1"/>
</dbReference>
<dbReference type="Pfam" id="PF18693">
    <property type="entry name" value="TRAM_2"/>
    <property type="match status" value="1"/>
</dbReference>
<dbReference type="Pfam" id="PF00919">
    <property type="entry name" value="UPF0004"/>
    <property type="match status" value="1"/>
</dbReference>
<dbReference type="SFLD" id="SFLDG01082">
    <property type="entry name" value="B12-binding_domain_containing"/>
    <property type="match status" value="1"/>
</dbReference>
<dbReference type="SFLD" id="SFLDS00029">
    <property type="entry name" value="Radical_SAM"/>
    <property type="match status" value="1"/>
</dbReference>
<dbReference type="SFLD" id="SFLDF00274">
    <property type="entry name" value="ribosomal_protein_S12_methylth"/>
    <property type="match status" value="1"/>
</dbReference>
<dbReference type="SMART" id="SM00729">
    <property type="entry name" value="Elp3"/>
    <property type="match status" value="1"/>
</dbReference>
<dbReference type="SUPFAM" id="SSF102114">
    <property type="entry name" value="Radical SAM enzymes"/>
    <property type="match status" value="1"/>
</dbReference>
<dbReference type="PROSITE" id="PS51449">
    <property type="entry name" value="MTTASE_N"/>
    <property type="match status" value="1"/>
</dbReference>
<dbReference type="PROSITE" id="PS01278">
    <property type="entry name" value="MTTASE_RADICAL"/>
    <property type="match status" value="1"/>
</dbReference>
<dbReference type="PROSITE" id="PS51918">
    <property type="entry name" value="RADICAL_SAM"/>
    <property type="match status" value="1"/>
</dbReference>
<dbReference type="PROSITE" id="PS50926">
    <property type="entry name" value="TRAM"/>
    <property type="match status" value="1"/>
</dbReference>